<gene>
    <name evidence="5" type="primary">vlp10</name>
    <name evidence="6" type="synonym">vmp10</name>
</gene>
<sequence length="366" mass="37667">MRKRISAIIMTLFMVLASCSNQLEAEKLAAESKNTFFDSLVKIGQGFQDIFGILEMQLGDALGFNAVKSGDKKSKVGEHFKKIGDGLTTTKDKLKELSNKISEAKNANSSTIEAVKSAINSASDVFEQLITALTKLADTAKEAGDTNIGDNADAVPGAAEKTGVEAIIAGVKDIIGAAEKSGVKIEYGNAGDPIATAANTTDALAVLGGNTAKATQGAGDKLAFEVSKADPWAIIDKIKNAKAADGIQLDAGEKDAGTLAASNNNASANAGAESNAASSSSWLFLMQLSKGGKFSAAVADAGAVKAAAVSAVNKVLGVLDFIIRKTVSSNLDKIREAVKGIKYSEITETDATESGDAQPITNKSSN</sequence>
<keyword id="KW-0998">Cell outer membrane</keyword>
<keyword id="KW-0449">Lipoprotein</keyword>
<keyword id="KW-0472">Membrane</keyword>
<keyword id="KW-0564">Palmitate</keyword>
<keyword id="KW-0614">Plasmid</keyword>
<keyword id="KW-0732">Signal</keyword>
<reference evidence="9" key="1">
    <citation type="submission" date="1996-03" db="EMBL/GenBank/DDBJ databases">
        <authorList>
            <person name="Restrepo B.I."/>
            <person name="Carter C.J."/>
            <person name="Infante D."/>
            <person name="Barbour A.G."/>
        </authorList>
    </citation>
    <scope>NUCLEOTIDE SEQUENCE [GENOMIC DNA]</scope>
    <source>
        <strain>ATCC 35209 / HS1</strain>
    </source>
</reference>
<reference evidence="7" key="2">
    <citation type="journal article" date="1998" name="Infect. Immun.">
        <title>Population structure of the relapsing fever spirochete Borrelia hermsii as indicated by polymorphism of two multigene families that encode immunogenic outer surface lipoproteins.</title>
        <authorList>
            <person name="Hinnebusch B.J."/>
            <person name="Barbour A.G."/>
            <person name="Restrepo B.I."/>
            <person name="Schwan T.G."/>
        </authorList>
    </citation>
    <scope>NOMENCLATURE</scope>
</reference>
<organism>
    <name type="scientific">Borrelia hermsii</name>
    <dbReference type="NCBI Taxonomy" id="140"/>
    <lineage>
        <taxon>Bacteria</taxon>
        <taxon>Pseudomonadati</taxon>
        <taxon>Spirochaetota</taxon>
        <taxon>Spirochaetia</taxon>
        <taxon>Spirochaetales</taxon>
        <taxon>Borreliaceae</taxon>
        <taxon>Borrelia</taxon>
    </lineage>
</organism>
<comment type="function">
    <text evidence="1">The Vlp and Vsp proteins are antigenically distinct proteins, only one vlp or vsp gene is transcriptionally active at any one time. Switching between these genes is a mechanism of host immune response evasion.</text>
</comment>
<comment type="subcellular location">
    <subcellularLocation>
        <location evidence="1">Cell outer membrane</location>
        <topology>Lipid-anchor</topology>
    </subcellularLocation>
</comment>
<comment type="miscellaneous">
    <text evidence="8">Genes for both Vlp and Vsp families are on (usually) unnamed linear plasmids in B.hermsii HS1.</text>
</comment>
<comment type="similarity">
    <text evidence="4">Belongs to the variable large protein (Vlp) family. Beta subfamily.</text>
</comment>
<accession>P70900</accession>
<proteinExistence type="inferred from homology"/>
<evidence type="ECO:0000250" key="1">
    <source>
        <dbReference type="UniProtKB" id="P21875"/>
    </source>
</evidence>
<evidence type="ECO:0000255" key="2"/>
<evidence type="ECO:0000255" key="3">
    <source>
        <dbReference type="PROSITE-ProRule" id="PRU00303"/>
    </source>
</evidence>
<evidence type="ECO:0000269" key="4">
    <source>
    </source>
</evidence>
<evidence type="ECO:0000303" key="5">
    <source>
    </source>
</evidence>
<evidence type="ECO:0000303" key="6">
    <source ref="1"/>
</evidence>
<evidence type="ECO:0000305" key="7"/>
<evidence type="ECO:0000305" key="8">
    <source>
    </source>
</evidence>
<evidence type="ECO:0000312" key="9">
    <source>
        <dbReference type="EMBL" id="AAB17733.1"/>
    </source>
</evidence>
<feature type="signal peptide" evidence="3">
    <location>
        <begin position="1"/>
        <end position="18"/>
    </location>
</feature>
<feature type="chain" id="PRO_0000244502" description="Variable large protein 10" evidence="2">
    <location>
        <begin position="19"/>
        <end position="366"/>
    </location>
</feature>
<feature type="lipid moiety-binding region" description="N-palmitoyl cysteine" evidence="2 7">
    <location>
        <position position="19"/>
    </location>
</feature>
<feature type="lipid moiety-binding region" description="S-diacylglycerol cysteine" evidence="2 7">
    <location>
        <position position="19"/>
    </location>
</feature>
<geneLocation type="plasmid" evidence="4"/>
<name>VLP10_BORHE</name>
<protein>
    <recommendedName>
        <fullName evidence="5">Variable large protein 10</fullName>
    </recommendedName>
</protein>
<dbReference type="EMBL" id="U52037">
    <property type="protein sequence ID" value="AAB17733.1"/>
    <property type="molecule type" value="Genomic_DNA"/>
</dbReference>
<dbReference type="SMR" id="P70900"/>
<dbReference type="GO" id="GO:0009279">
    <property type="term" value="C:cell outer membrane"/>
    <property type="evidence" value="ECO:0007669"/>
    <property type="project" value="UniProtKB-SubCell"/>
</dbReference>
<dbReference type="InterPro" id="IPR000680">
    <property type="entry name" value="Borrelia_lipo"/>
</dbReference>
<dbReference type="Pfam" id="PF00921">
    <property type="entry name" value="Lipoprotein_2"/>
    <property type="match status" value="1"/>
</dbReference>
<dbReference type="SUPFAM" id="SSF74748">
    <property type="entry name" value="Variable surface antigen VlsE"/>
    <property type="match status" value="1"/>
</dbReference>
<dbReference type="PROSITE" id="PS51257">
    <property type="entry name" value="PROKAR_LIPOPROTEIN"/>
    <property type="match status" value="1"/>
</dbReference>